<reference key="1">
    <citation type="journal article" date="2008" name="PLoS Genet.">
        <title>Genomic islands in the pathogenic filamentous fungus Aspergillus fumigatus.</title>
        <authorList>
            <person name="Fedorova N.D."/>
            <person name="Khaldi N."/>
            <person name="Joardar V.S."/>
            <person name="Maiti R."/>
            <person name="Amedeo P."/>
            <person name="Anderson M.J."/>
            <person name="Crabtree J."/>
            <person name="Silva J.C."/>
            <person name="Badger J.H."/>
            <person name="Albarraq A."/>
            <person name="Angiuoli S."/>
            <person name="Bussey H."/>
            <person name="Bowyer P."/>
            <person name="Cotty P.J."/>
            <person name="Dyer P.S."/>
            <person name="Egan A."/>
            <person name="Galens K."/>
            <person name="Fraser-Liggett C.M."/>
            <person name="Haas B.J."/>
            <person name="Inman J.M."/>
            <person name="Kent R."/>
            <person name="Lemieux S."/>
            <person name="Malavazi I."/>
            <person name="Orvis J."/>
            <person name="Roemer T."/>
            <person name="Ronning C.M."/>
            <person name="Sundaram J.P."/>
            <person name="Sutton G."/>
            <person name="Turner G."/>
            <person name="Venter J.C."/>
            <person name="White O.R."/>
            <person name="Whitty B.R."/>
            <person name="Youngman P."/>
            <person name="Wolfe K.H."/>
            <person name="Goldman G.H."/>
            <person name="Wortman J.R."/>
            <person name="Jiang B."/>
            <person name="Denning D.W."/>
            <person name="Nierman W.C."/>
        </authorList>
    </citation>
    <scope>NUCLEOTIDE SEQUENCE [LARGE SCALE GENOMIC DNA]</scope>
    <source>
        <strain>ATCC 1007 / CBS 513.65 / DSM 816 / NCTC 3887 / NRRL 1 / QM 1276 / 107</strain>
    </source>
</reference>
<keyword id="KW-0067">ATP-binding</keyword>
<keyword id="KW-0347">Helicase</keyword>
<keyword id="KW-0378">Hydrolase</keyword>
<keyword id="KW-0547">Nucleotide-binding</keyword>
<keyword id="KW-0539">Nucleus</keyword>
<keyword id="KW-1185">Reference proteome</keyword>
<keyword id="KW-0690">Ribosome biogenesis</keyword>
<keyword id="KW-0694">RNA-binding</keyword>
<keyword id="KW-0698">rRNA processing</keyword>
<comment type="function">
    <text>ATP-dependent RNA helicase involved in 40S ribosomal subunit biogenesis. Required for the processing and cleavage of 35S pre-rRNA at sites A0, A1, and A2, leading to mature 18S rRNA.</text>
</comment>
<comment type="catalytic activity">
    <reaction>
        <text>ATP + H2O = ADP + phosphate + H(+)</text>
        <dbReference type="Rhea" id="RHEA:13065"/>
        <dbReference type="ChEBI" id="CHEBI:15377"/>
        <dbReference type="ChEBI" id="CHEBI:15378"/>
        <dbReference type="ChEBI" id="CHEBI:30616"/>
        <dbReference type="ChEBI" id="CHEBI:43474"/>
        <dbReference type="ChEBI" id="CHEBI:456216"/>
        <dbReference type="EC" id="3.6.4.13"/>
    </reaction>
</comment>
<comment type="subunit">
    <text evidence="1">Associates in the nucleolus with the 60S and pre-60S ribosomal subunits.</text>
</comment>
<comment type="subcellular location">
    <subcellularLocation>
        <location evidence="1">Nucleus</location>
        <location evidence="1">Nucleolus</location>
    </subcellularLocation>
</comment>
<comment type="domain">
    <text>The Q motif is unique to and characteristic of the DEAD box family of RNA helicases and controls ATP binding and hydrolysis.</text>
</comment>
<comment type="similarity">
    <text evidence="5">Belongs to the DEAD box helicase family. DDX18/HAS1 subfamily.</text>
</comment>
<evidence type="ECO:0000250" key="1"/>
<evidence type="ECO:0000255" key="2">
    <source>
        <dbReference type="PROSITE-ProRule" id="PRU00541"/>
    </source>
</evidence>
<evidence type="ECO:0000255" key="3">
    <source>
        <dbReference type="PROSITE-ProRule" id="PRU00542"/>
    </source>
</evidence>
<evidence type="ECO:0000256" key="4">
    <source>
        <dbReference type="SAM" id="MobiDB-lite"/>
    </source>
</evidence>
<evidence type="ECO:0000305" key="5"/>
<feature type="chain" id="PRO_0000282468" description="ATP-dependent RNA helicase has1">
    <location>
        <begin position="1"/>
        <end position="625"/>
    </location>
</feature>
<feature type="domain" description="Helicase ATP-binding" evidence="2">
    <location>
        <begin position="174"/>
        <end position="350"/>
    </location>
</feature>
<feature type="domain" description="Helicase C-terminal" evidence="3">
    <location>
        <begin position="364"/>
        <end position="534"/>
    </location>
</feature>
<feature type="region of interest" description="Disordered" evidence="4">
    <location>
        <begin position="1"/>
        <end position="139"/>
    </location>
</feature>
<feature type="region of interest" description="Disordered" evidence="4">
    <location>
        <begin position="591"/>
        <end position="625"/>
    </location>
</feature>
<feature type="short sequence motif" description="Q motif">
    <location>
        <begin position="143"/>
        <end position="171"/>
    </location>
</feature>
<feature type="short sequence motif" description="DEAD box">
    <location>
        <begin position="297"/>
        <end position="300"/>
    </location>
</feature>
<feature type="compositionally biased region" description="Basic residues" evidence="4">
    <location>
        <begin position="11"/>
        <end position="21"/>
    </location>
</feature>
<feature type="compositionally biased region" description="Basic and acidic residues" evidence="4">
    <location>
        <begin position="48"/>
        <end position="65"/>
    </location>
</feature>
<feature type="compositionally biased region" description="Acidic residues" evidence="4">
    <location>
        <begin position="78"/>
        <end position="88"/>
    </location>
</feature>
<feature type="compositionally biased region" description="Acidic residues" evidence="4">
    <location>
        <begin position="96"/>
        <end position="116"/>
    </location>
</feature>
<feature type="compositionally biased region" description="Polar residues" evidence="4">
    <location>
        <begin position="601"/>
        <end position="613"/>
    </location>
</feature>
<feature type="binding site" evidence="2">
    <location>
        <begin position="187"/>
        <end position="194"/>
    </location>
    <ligand>
        <name>ATP</name>
        <dbReference type="ChEBI" id="CHEBI:30616"/>
    </ligand>
</feature>
<name>HAS1_ASPCL</name>
<proteinExistence type="inferred from homology"/>
<protein>
    <recommendedName>
        <fullName>ATP-dependent RNA helicase has1</fullName>
        <ecNumber>3.6.4.13</ecNumber>
    </recommendedName>
</protein>
<dbReference type="EC" id="3.6.4.13"/>
<dbReference type="EMBL" id="DS027054">
    <property type="protein sequence ID" value="EAW10760.1"/>
    <property type="molecule type" value="Genomic_DNA"/>
</dbReference>
<dbReference type="RefSeq" id="XP_001272186.1">
    <property type="nucleotide sequence ID" value="XM_001272185.1"/>
</dbReference>
<dbReference type="SMR" id="A1CIQ5"/>
<dbReference type="STRING" id="344612.A1CIQ5"/>
<dbReference type="EnsemblFungi" id="EAW10760">
    <property type="protein sequence ID" value="EAW10760"/>
    <property type="gene ID" value="ACLA_052330"/>
</dbReference>
<dbReference type="GeneID" id="4703643"/>
<dbReference type="KEGG" id="act:ACLA_052330"/>
<dbReference type="VEuPathDB" id="FungiDB:ACLA_052330"/>
<dbReference type="eggNOG" id="KOG0342">
    <property type="taxonomic scope" value="Eukaryota"/>
</dbReference>
<dbReference type="HOGENOM" id="CLU_003041_26_5_1"/>
<dbReference type="OMA" id="LMEFHSQ"/>
<dbReference type="OrthoDB" id="10259640at2759"/>
<dbReference type="Proteomes" id="UP000006701">
    <property type="component" value="Unassembled WGS sequence"/>
</dbReference>
<dbReference type="GO" id="GO:0005635">
    <property type="term" value="C:nuclear envelope"/>
    <property type="evidence" value="ECO:0007669"/>
    <property type="project" value="EnsemblFungi"/>
</dbReference>
<dbReference type="GO" id="GO:0005730">
    <property type="term" value="C:nucleolus"/>
    <property type="evidence" value="ECO:0007669"/>
    <property type="project" value="UniProtKB-SubCell"/>
</dbReference>
<dbReference type="GO" id="GO:0030687">
    <property type="term" value="C:preribosome, large subunit precursor"/>
    <property type="evidence" value="ECO:0007669"/>
    <property type="project" value="EnsemblFungi"/>
</dbReference>
<dbReference type="GO" id="GO:0032040">
    <property type="term" value="C:small-subunit processome"/>
    <property type="evidence" value="ECO:0007669"/>
    <property type="project" value="EnsemblFungi"/>
</dbReference>
<dbReference type="GO" id="GO:0005524">
    <property type="term" value="F:ATP binding"/>
    <property type="evidence" value="ECO:0007669"/>
    <property type="project" value="UniProtKB-KW"/>
</dbReference>
<dbReference type="GO" id="GO:0016887">
    <property type="term" value="F:ATP hydrolysis activity"/>
    <property type="evidence" value="ECO:0007669"/>
    <property type="project" value="RHEA"/>
</dbReference>
<dbReference type="GO" id="GO:0042802">
    <property type="term" value="F:identical protein binding"/>
    <property type="evidence" value="ECO:0007669"/>
    <property type="project" value="EnsemblFungi"/>
</dbReference>
<dbReference type="GO" id="GO:0003723">
    <property type="term" value="F:RNA binding"/>
    <property type="evidence" value="ECO:0007669"/>
    <property type="project" value="UniProtKB-KW"/>
</dbReference>
<dbReference type="GO" id="GO:0003724">
    <property type="term" value="F:RNA helicase activity"/>
    <property type="evidence" value="ECO:0007669"/>
    <property type="project" value="UniProtKB-EC"/>
</dbReference>
<dbReference type="GO" id="GO:0000463">
    <property type="term" value="P:maturation of LSU-rRNA from tricistronic rRNA transcript (SSU-rRNA, 5.8S rRNA, LSU-rRNA)"/>
    <property type="evidence" value="ECO:0007669"/>
    <property type="project" value="EnsemblFungi"/>
</dbReference>
<dbReference type="GO" id="GO:0000462">
    <property type="term" value="P:maturation of SSU-rRNA from tricistronic rRNA transcript (SSU-rRNA, 5.8S rRNA, LSU-rRNA)"/>
    <property type="evidence" value="ECO:0007669"/>
    <property type="project" value="EnsemblFungi"/>
</dbReference>
<dbReference type="GO" id="GO:1990417">
    <property type="term" value="P:snoRNA release from pre-rRNA"/>
    <property type="evidence" value="ECO:0007669"/>
    <property type="project" value="EnsemblFungi"/>
</dbReference>
<dbReference type="CDD" id="cd17942">
    <property type="entry name" value="DEADc_DDX18"/>
    <property type="match status" value="1"/>
</dbReference>
<dbReference type="CDD" id="cd18787">
    <property type="entry name" value="SF2_C_DEAD"/>
    <property type="match status" value="1"/>
</dbReference>
<dbReference type="FunFam" id="3.40.50.300:FF:000379">
    <property type="entry name" value="RNA helicase"/>
    <property type="match status" value="1"/>
</dbReference>
<dbReference type="FunFam" id="3.40.50.300:FF:000460">
    <property type="entry name" value="RNA helicase"/>
    <property type="match status" value="1"/>
</dbReference>
<dbReference type="Gene3D" id="3.40.50.300">
    <property type="entry name" value="P-loop containing nucleotide triphosphate hydrolases"/>
    <property type="match status" value="2"/>
</dbReference>
<dbReference type="InterPro" id="IPR044773">
    <property type="entry name" value="DDX18/Has1_DEADc"/>
</dbReference>
<dbReference type="InterPro" id="IPR011545">
    <property type="entry name" value="DEAD/DEAH_box_helicase_dom"/>
</dbReference>
<dbReference type="InterPro" id="IPR014001">
    <property type="entry name" value="Helicase_ATP-bd"/>
</dbReference>
<dbReference type="InterPro" id="IPR001650">
    <property type="entry name" value="Helicase_C-like"/>
</dbReference>
<dbReference type="InterPro" id="IPR027417">
    <property type="entry name" value="P-loop_NTPase"/>
</dbReference>
<dbReference type="InterPro" id="IPR000629">
    <property type="entry name" value="RNA-helicase_DEAD-box_CS"/>
</dbReference>
<dbReference type="InterPro" id="IPR014014">
    <property type="entry name" value="RNA_helicase_DEAD_Q_motif"/>
</dbReference>
<dbReference type="InterPro" id="IPR025313">
    <property type="entry name" value="SPB4-like_CTE"/>
</dbReference>
<dbReference type="PANTHER" id="PTHR24031">
    <property type="entry name" value="RNA HELICASE"/>
    <property type="match status" value="1"/>
</dbReference>
<dbReference type="Pfam" id="PF13959">
    <property type="entry name" value="CTE_SPB4"/>
    <property type="match status" value="1"/>
</dbReference>
<dbReference type="Pfam" id="PF00270">
    <property type="entry name" value="DEAD"/>
    <property type="match status" value="1"/>
</dbReference>
<dbReference type="Pfam" id="PF00271">
    <property type="entry name" value="Helicase_C"/>
    <property type="match status" value="1"/>
</dbReference>
<dbReference type="SMART" id="SM00487">
    <property type="entry name" value="DEXDc"/>
    <property type="match status" value="1"/>
</dbReference>
<dbReference type="SMART" id="SM01178">
    <property type="entry name" value="DUF4217"/>
    <property type="match status" value="1"/>
</dbReference>
<dbReference type="SMART" id="SM00490">
    <property type="entry name" value="HELICc"/>
    <property type="match status" value="1"/>
</dbReference>
<dbReference type="SUPFAM" id="SSF52540">
    <property type="entry name" value="P-loop containing nucleoside triphosphate hydrolases"/>
    <property type="match status" value="2"/>
</dbReference>
<dbReference type="PROSITE" id="PS00039">
    <property type="entry name" value="DEAD_ATP_HELICASE"/>
    <property type="match status" value="1"/>
</dbReference>
<dbReference type="PROSITE" id="PS51192">
    <property type="entry name" value="HELICASE_ATP_BIND_1"/>
    <property type="match status" value="1"/>
</dbReference>
<dbReference type="PROSITE" id="PS51194">
    <property type="entry name" value="HELICASE_CTER"/>
    <property type="match status" value="1"/>
</dbReference>
<dbReference type="PROSITE" id="PS51195">
    <property type="entry name" value="Q_MOTIF"/>
    <property type="match status" value="1"/>
</dbReference>
<gene>
    <name type="primary">has1</name>
    <name type="ORF">ACLA_052330</name>
</gene>
<accession>A1CIQ5</accession>
<organism>
    <name type="scientific">Aspergillus clavatus (strain ATCC 1007 / CBS 513.65 / DSM 816 / NCTC 3887 / NRRL 1 / QM 1276 / 107)</name>
    <dbReference type="NCBI Taxonomy" id="344612"/>
    <lineage>
        <taxon>Eukaryota</taxon>
        <taxon>Fungi</taxon>
        <taxon>Dikarya</taxon>
        <taxon>Ascomycota</taxon>
        <taxon>Pezizomycotina</taxon>
        <taxon>Eurotiomycetes</taxon>
        <taxon>Eurotiomycetidae</taxon>
        <taxon>Eurotiales</taxon>
        <taxon>Aspergillaceae</taxon>
        <taxon>Aspergillus</taxon>
        <taxon>Aspergillus subgen. Fumigati</taxon>
    </lineage>
</organism>
<sequence>MPGPVDTAKSITKKRKRKHGGNGRATAETADDASPLPAAENGAVTESSAKKEVKADKKSGKEKEKALKKRKVSHSSSDEEEEEEDDEAATSGPVDEASDDEAEVEEDGSDNEDGDAEDKNDAEAADLPSMDAVRLPTVDGEPQKFTELGLSEKTLKAINEMGFETMTEIQRRTIPPLLAGRDVLGAAKTGSGKTLSFLIPAVEMLSALRFKPRNGTGVLVVSPTRELALQIFGVARELCQHHSQTYGIVIGGANRRAEAEKLMKGVNLLIATPGRLLDHLQNTQGFVFKNLKTLVIDEADRILEVGFEDEMRQIVKILPSEERQTMLFSATQTTKVEDLARISLRPGPLYINVDHRKEHSTVEGLEQGYVICEADKRFLLLFSFLKRNLKKKIIVFFSSCNCVKYHAELLNYIDLPVLELHGKQKQQKRTNTFFEFCNAKQGTLICTDVAARGLDIPAVDWIIQFDPPDDPRDYIHRVGRTARGANAKGRSLMFLQPSEVGFLKHLKEARVPVVEFEFPASKIVNVQSQLEKLIGQNYYLNKSAKEGYRSYLQAYASHSLRSVFDVHKLDLVKVAKGFGFSTPPRIDIQLGASLSRDKKQQQQGRRNYGSQPNGKGLKFKRKYED</sequence>